<feature type="signal peptide" evidence="2">
    <location>
        <begin position="1"/>
        <end position="23"/>
    </location>
</feature>
<feature type="chain" id="PRO_0000379607" description="Putative defensin-like protein 25">
    <location>
        <begin position="24"/>
        <end position="81"/>
    </location>
</feature>
<feature type="disulfide bond" evidence="1">
    <location>
        <begin position="33"/>
        <end position="81"/>
    </location>
</feature>
<feature type="disulfide bond" evidence="1">
    <location>
        <begin position="43"/>
        <end position="68"/>
    </location>
</feature>
<feature type="disulfide bond" evidence="1">
    <location>
        <begin position="52"/>
        <end position="77"/>
    </location>
</feature>
<feature type="disulfide bond" evidence="1">
    <location>
        <begin position="56"/>
        <end position="79"/>
    </location>
</feature>
<protein>
    <recommendedName>
        <fullName>Putative defensin-like protein 25</fullName>
    </recommendedName>
</protein>
<sequence>MASLKVFSFALILVLTFSVDVEGYNVESGGSLCCNNHPKFGKCNTNNDNQRCNRWCHNGCGNGKGDYCKAMSHGGLCHCYC</sequence>
<organism>
    <name type="scientific">Arabidopsis thaliana</name>
    <name type="common">Mouse-ear cress</name>
    <dbReference type="NCBI Taxonomy" id="3702"/>
    <lineage>
        <taxon>Eukaryota</taxon>
        <taxon>Viridiplantae</taxon>
        <taxon>Streptophyta</taxon>
        <taxon>Embryophyta</taxon>
        <taxon>Tracheophyta</taxon>
        <taxon>Spermatophyta</taxon>
        <taxon>Magnoliopsida</taxon>
        <taxon>eudicotyledons</taxon>
        <taxon>Gunneridae</taxon>
        <taxon>Pentapetalae</taxon>
        <taxon>rosids</taxon>
        <taxon>malvids</taxon>
        <taxon>Brassicales</taxon>
        <taxon>Brassicaceae</taxon>
        <taxon>Camelineae</taxon>
        <taxon>Arabidopsis</taxon>
    </lineage>
</organism>
<evidence type="ECO:0000250" key="1"/>
<evidence type="ECO:0000255" key="2"/>
<evidence type="ECO:0000305" key="3"/>
<dbReference type="EMBL" id="AL133421">
    <property type="status" value="NOT_ANNOTATED_CDS"/>
    <property type="molecule type" value="Genomic_DNA"/>
</dbReference>
<dbReference type="EMBL" id="AL357612">
    <property type="status" value="NOT_ANNOTATED_CDS"/>
    <property type="molecule type" value="Genomic_DNA"/>
</dbReference>
<dbReference type="EMBL" id="CP002688">
    <property type="protein sequence ID" value="AED91239.1"/>
    <property type="molecule type" value="Genomic_DNA"/>
</dbReference>
<dbReference type="RefSeq" id="NP_001031852.1">
    <property type="nucleotide sequence ID" value="NM_001036775.1"/>
</dbReference>
<dbReference type="PaxDb" id="3702-AT5G08055.1"/>
<dbReference type="EnsemblPlants" id="AT5G08055.1">
    <property type="protein sequence ID" value="AT5G08055.1"/>
    <property type="gene ID" value="AT5G08055"/>
</dbReference>
<dbReference type="GeneID" id="3770608"/>
<dbReference type="Gramene" id="AT5G08055.1">
    <property type="protein sequence ID" value="AT5G08055.1"/>
    <property type="gene ID" value="AT5G08055"/>
</dbReference>
<dbReference type="KEGG" id="ath:AT5G08055"/>
<dbReference type="Araport" id="AT5G08055"/>
<dbReference type="TAIR" id="AT5G08055"/>
<dbReference type="HOGENOM" id="CLU_185732_0_0_1"/>
<dbReference type="InParanoid" id="Q2V392"/>
<dbReference type="OMA" id="CKAMSHG"/>
<dbReference type="PhylomeDB" id="Q2V392"/>
<dbReference type="PRO" id="PR:Q2V392"/>
<dbReference type="Proteomes" id="UP000006548">
    <property type="component" value="Chromosome 5"/>
</dbReference>
<dbReference type="ExpressionAtlas" id="Q2V392">
    <property type="expression patterns" value="baseline"/>
</dbReference>
<dbReference type="GO" id="GO:0005576">
    <property type="term" value="C:extracellular region"/>
    <property type="evidence" value="ECO:0007669"/>
    <property type="project" value="UniProtKB-SubCell"/>
</dbReference>
<dbReference type="GO" id="GO:0050832">
    <property type="term" value="P:defense response to fungus"/>
    <property type="evidence" value="ECO:0007669"/>
    <property type="project" value="UniProtKB-KW"/>
</dbReference>
<dbReference type="GO" id="GO:0031640">
    <property type="term" value="P:killing of cells of another organism"/>
    <property type="evidence" value="ECO:0007669"/>
    <property type="project" value="UniProtKB-KW"/>
</dbReference>
<dbReference type="InterPro" id="IPR022618">
    <property type="entry name" value="Defensin-like_20-28"/>
</dbReference>
<dbReference type="PANTHER" id="PTHR34453">
    <property type="entry name" value="DEFENSIN-LIKE (DEFL) FAMILY PROTEIN-RELATED"/>
    <property type="match status" value="1"/>
</dbReference>
<dbReference type="PANTHER" id="PTHR34453:SF7">
    <property type="entry name" value="DEFENSIN-LIKE PROTEIN 22-RELATED"/>
    <property type="match status" value="1"/>
</dbReference>
<dbReference type="Pfam" id="PF10868">
    <property type="entry name" value="Defensin_like"/>
    <property type="match status" value="1"/>
</dbReference>
<name>DEF25_ARATH</name>
<comment type="subcellular location">
    <subcellularLocation>
        <location evidence="1">Secreted</location>
    </subcellularLocation>
</comment>
<comment type="similarity">
    <text evidence="3">Belongs to the DEFL family.</text>
</comment>
<reference key="1">
    <citation type="journal article" date="2000" name="Nature">
        <title>Sequence and analysis of chromosome 5 of the plant Arabidopsis thaliana.</title>
        <authorList>
            <person name="Tabata S."/>
            <person name="Kaneko T."/>
            <person name="Nakamura Y."/>
            <person name="Kotani H."/>
            <person name="Kato T."/>
            <person name="Asamizu E."/>
            <person name="Miyajima N."/>
            <person name="Sasamoto S."/>
            <person name="Kimura T."/>
            <person name="Hosouchi T."/>
            <person name="Kawashima K."/>
            <person name="Kohara M."/>
            <person name="Matsumoto M."/>
            <person name="Matsuno A."/>
            <person name="Muraki A."/>
            <person name="Nakayama S."/>
            <person name="Nakazaki N."/>
            <person name="Naruo K."/>
            <person name="Okumura S."/>
            <person name="Shinpo S."/>
            <person name="Takeuchi C."/>
            <person name="Wada T."/>
            <person name="Watanabe A."/>
            <person name="Yamada M."/>
            <person name="Yasuda M."/>
            <person name="Sato S."/>
            <person name="de la Bastide M."/>
            <person name="Huang E."/>
            <person name="Spiegel L."/>
            <person name="Gnoj L."/>
            <person name="O'Shaughnessy A."/>
            <person name="Preston R."/>
            <person name="Habermann K."/>
            <person name="Murray J."/>
            <person name="Johnson D."/>
            <person name="Rohlfing T."/>
            <person name="Nelson J."/>
            <person name="Stoneking T."/>
            <person name="Pepin K."/>
            <person name="Spieth J."/>
            <person name="Sekhon M."/>
            <person name="Armstrong J."/>
            <person name="Becker M."/>
            <person name="Belter E."/>
            <person name="Cordum H."/>
            <person name="Cordes M."/>
            <person name="Courtney L."/>
            <person name="Courtney W."/>
            <person name="Dante M."/>
            <person name="Du H."/>
            <person name="Edwards J."/>
            <person name="Fryman J."/>
            <person name="Haakensen B."/>
            <person name="Lamar E."/>
            <person name="Latreille P."/>
            <person name="Leonard S."/>
            <person name="Meyer R."/>
            <person name="Mulvaney E."/>
            <person name="Ozersky P."/>
            <person name="Riley A."/>
            <person name="Strowmatt C."/>
            <person name="Wagner-McPherson C."/>
            <person name="Wollam A."/>
            <person name="Yoakum M."/>
            <person name="Bell M."/>
            <person name="Dedhia N."/>
            <person name="Parnell L."/>
            <person name="Shah R."/>
            <person name="Rodriguez M."/>
            <person name="Hoon See L."/>
            <person name="Vil D."/>
            <person name="Baker J."/>
            <person name="Kirchoff K."/>
            <person name="Toth K."/>
            <person name="King L."/>
            <person name="Bahret A."/>
            <person name="Miller B."/>
            <person name="Marra M.A."/>
            <person name="Martienssen R."/>
            <person name="McCombie W.R."/>
            <person name="Wilson R.K."/>
            <person name="Murphy G."/>
            <person name="Bancroft I."/>
            <person name="Volckaert G."/>
            <person name="Wambutt R."/>
            <person name="Duesterhoeft A."/>
            <person name="Stiekema W."/>
            <person name="Pohl T."/>
            <person name="Entian K.-D."/>
            <person name="Terryn N."/>
            <person name="Hartley N."/>
            <person name="Bent E."/>
            <person name="Johnson S."/>
            <person name="Langham S.-A."/>
            <person name="McCullagh B."/>
            <person name="Robben J."/>
            <person name="Grymonprez B."/>
            <person name="Zimmermann W."/>
            <person name="Ramsperger U."/>
            <person name="Wedler H."/>
            <person name="Balke K."/>
            <person name="Wedler E."/>
            <person name="Peters S."/>
            <person name="van Staveren M."/>
            <person name="Dirkse W."/>
            <person name="Mooijman P."/>
            <person name="Klein Lankhorst R."/>
            <person name="Weitzenegger T."/>
            <person name="Bothe G."/>
            <person name="Rose M."/>
            <person name="Hauf J."/>
            <person name="Berneiser S."/>
            <person name="Hempel S."/>
            <person name="Feldpausch M."/>
            <person name="Lamberth S."/>
            <person name="Villarroel R."/>
            <person name="Gielen J."/>
            <person name="Ardiles W."/>
            <person name="Bents O."/>
            <person name="Lemcke K."/>
            <person name="Kolesov G."/>
            <person name="Mayer K.F.X."/>
            <person name="Rudd S."/>
            <person name="Schoof H."/>
            <person name="Schueller C."/>
            <person name="Zaccaria P."/>
            <person name="Mewes H.-W."/>
            <person name="Bevan M."/>
            <person name="Fransz P.F."/>
        </authorList>
    </citation>
    <scope>NUCLEOTIDE SEQUENCE [LARGE SCALE GENOMIC DNA]</scope>
    <source>
        <strain>cv. Columbia</strain>
    </source>
</reference>
<reference key="2">
    <citation type="journal article" date="2017" name="Plant J.">
        <title>Araport11: a complete reannotation of the Arabidopsis thaliana reference genome.</title>
        <authorList>
            <person name="Cheng C.Y."/>
            <person name="Krishnakumar V."/>
            <person name="Chan A.P."/>
            <person name="Thibaud-Nissen F."/>
            <person name="Schobel S."/>
            <person name="Town C.D."/>
        </authorList>
    </citation>
    <scope>GENOME REANNOTATION</scope>
    <source>
        <strain>cv. Columbia</strain>
    </source>
</reference>
<reference key="3">
    <citation type="journal article" date="2005" name="Plant Physiol.">
        <title>Genome organization of more than 300 defensin-like genes in Arabidopsis.</title>
        <authorList>
            <person name="Silverstein K.A.T."/>
            <person name="Graham M.A."/>
            <person name="Paape T.D."/>
            <person name="VandenBosch K.A."/>
        </authorList>
    </citation>
    <scope>GENE FAMILY</scope>
</reference>
<accession>Q2V392</accession>
<gene>
    <name type="ordered locus">At5g08055</name>
    <name type="ORF">F13G24</name>
    <name type="ORF">T22D6</name>
</gene>
<proteinExistence type="inferred from homology"/>
<keyword id="KW-0929">Antimicrobial</keyword>
<keyword id="KW-1015">Disulfide bond</keyword>
<keyword id="KW-0295">Fungicide</keyword>
<keyword id="KW-0611">Plant defense</keyword>
<keyword id="KW-1185">Reference proteome</keyword>
<keyword id="KW-0964">Secreted</keyword>
<keyword id="KW-0732">Signal</keyword>